<organism>
    <name type="scientific">Neurospora crassa (strain ATCC 24698 / 74-OR23-1A / CBS 708.71 / DSM 1257 / FGSC 987)</name>
    <dbReference type="NCBI Taxonomy" id="367110"/>
    <lineage>
        <taxon>Eukaryota</taxon>
        <taxon>Fungi</taxon>
        <taxon>Dikarya</taxon>
        <taxon>Ascomycota</taxon>
        <taxon>Pezizomycotina</taxon>
        <taxon>Sordariomycetes</taxon>
        <taxon>Sordariomycetidae</taxon>
        <taxon>Sordariales</taxon>
        <taxon>Sordariaceae</taxon>
        <taxon>Neurospora</taxon>
    </lineage>
</organism>
<protein>
    <recommendedName>
        <fullName evidence="3">Large ribosomal subunit protein uL6m</fullName>
    </recommendedName>
</protein>
<comment type="function">
    <text evidence="5">Component of the mitochondrial ribosome (mitoribosome), a dedicated translation machinery responsible for the synthesis of mitochondrial genome-encoded proteins, including at least some of the essential transmembrane subunits of the mitochondrial respiratory chain. The mitoribosomes are attached to the mitochondrial inner membrane and translation products are cotranslationally integrated into the membrane.</text>
</comment>
<comment type="subunit">
    <text evidence="2">Component of the mitochondrial large ribosomal subunit (mt-LSU). Mature N.crassa 74S mitochondrial ribosomes consist of a small (37S) and a large (54S) subunit. The 37S small subunit contains a 16S ribosomal RNA (16S mt-rRNA) and 32 different proteins. The 54S large subunit contains a 23S rRNA (23S mt-rRNA) and 42 different proteins.</text>
</comment>
<comment type="subcellular location">
    <subcellularLocation>
        <location evidence="2">Mitochondrion</location>
    </subcellularLocation>
</comment>
<comment type="similarity">
    <text evidence="4">Belongs to the universal ribosomal protein uL6 family.</text>
</comment>
<gene>
    <name type="primary">mrpl6</name>
    <name type="ORF">NCU04068</name>
</gene>
<sequence length="255" mass="28586">MFAPSRRRVLEAVASSSSSPVVTLPGFLVPAFQQTAGAAARRNFSATTTRPSKLGRTPLSIPPGVEITIGEPFVKRDMTQWKQQPKRKITVQGPLGQLEMDIPDFIKIDHDAEARRATLSVANRDEKEQREMWGTTWAYLNRFIMGVSEGHTAVLRLVGIGYRATIDTRPEKEEYPGQQFVCLKLGFSHPVEMGVPKGMKASTPQPTRILLEGINREQVMTFAADIRRWRVPEPYKGKGIFVNGETIKLKQKKIK</sequence>
<evidence type="ECO:0000256" key="1">
    <source>
        <dbReference type="SAM" id="MobiDB-lite"/>
    </source>
</evidence>
<evidence type="ECO:0000269" key="2">
    <source>
    </source>
</evidence>
<evidence type="ECO:0000303" key="3">
    <source>
    </source>
</evidence>
<evidence type="ECO:0000305" key="4"/>
<evidence type="ECO:0000305" key="5">
    <source>
    </source>
</evidence>
<evidence type="ECO:0007744" key="6">
    <source>
        <dbReference type="PDB" id="6YWS"/>
    </source>
</evidence>
<evidence type="ECO:0007744" key="7">
    <source>
        <dbReference type="PDB" id="6YWV"/>
    </source>
</evidence>
<keyword id="KW-0002">3D-structure</keyword>
<keyword id="KW-0496">Mitochondrion</keyword>
<keyword id="KW-1185">Reference proteome</keyword>
<keyword id="KW-0687">Ribonucleoprotein</keyword>
<keyword id="KW-0689">Ribosomal protein</keyword>
<accession>Q7RZF0</accession>
<proteinExistence type="evidence at protein level"/>
<dbReference type="EMBL" id="CM002241">
    <property type="protein sequence ID" value="EAA28447.3"/>
    <property type="molecule type" value="Genomic_DNA"/>
</dbReference>
<dbReference type="RefSeq" id="XP_957683.3">
    <property type="nucleotide sequence ID" value="XM_952590.3"/>
</dbReference>
<dbReference type="PDB" id="6YWS">
    <property type="method" value="EM"/>
    <property type="resolution" value="2.74 A"/>
    <property type="chains" value="F=1-255"/>
</dbReference>
<dbReference type="PDB" id="6YWV">
    <property type="method" value="EM"/>
    <property type="resolution" value="3.03 A"/>
    <property type="chains" value="F=1-255"/>
</dbReference>
<dbReference type="PDB" id="6YWX">
    <property type="method" value="EM"/>
    <property type="resolution" value="3.10 A"/>
    <property type="chains" value="F=1-255"/>
</dbReference>
<dbReference type="PDBsum" id="6YWS"/>
<dbReference type="PDBsum" id="6YWV"/>
<dbReference type="PDBsum" id="6YWX"/>
<dbReference type="EMDB" id="EMD-10973"/>
<dbReference type="EMDB" id="EMD-10977"/>
<dbReference type="EMDB" id="EMD-10978"/>
<dbReference type="SMR" id="Q7RZF0"/>
<dbReference type="FunCoup" id="Q7RZF0">
    <property type="interactions" value="635"/>
</dbReference>
<dbReference type="STRING" id="367110.Q7RZF0"/>
<dbReference type="PaxDb" id="5141-EFNCRP00000003713"/>
<dbReference type="EnsemblFungi" id="EAA28447">
    <property type="protein sequence ID" value="EAA28447"/>
    <property type="gene ID" value="NCU04068"/>
</dbReference>
<dbReference type="GeneID" id="3873806"/>
<dbReference type="KEGG" id="ncr:NCU04068"/>
<dbReference type="VEuPathDB" id="FungiDB:NCU04068"/>
<dbReference type="HOGENOM" id="CLU_065464_1_0_1"/>
<dbReference type="InParanoid" id="Q7RZF0"/>
<dbReference type="OrthoDB" id="540873at2759"/>
<dbReference type="Proteomes" id="UP000001805">
    <property type="component" value="Chromosome 5, Linkage Group VI"/>
</dbReference>
<dbReference type="GO" id="GO:0005762">
    <property type="term" value="C:mitochondrial large ribosomal subunit"/>
    <property type="evidence" value="ECO:0000318"/>
    <property type="project" value="GO_Central"/>
</dbReference>
<dbReference type="GO" id="GO:0019843">
    <property type="term" value="F:rRNA binding"/>
    <property type="evidence" value="ECO:0007669"/>
    <property type="project" value="InterPro"/>
</dbReference>
<dbReference type="GO" id="GO:0003735">
    <property type="term" value="F:structural constituent of ribosome"/>
    <property type="evidence" value="ECO:0000318"/>
    <property type="project" value="GO_Central"/>
</dbReference>
<dbReference type="GO" id="GO:0006412">
    <property type="term" value="P:translation"/>
    <property type="evidence" value="ECO:0007669"/>
    <property type="project" value="InterPro"/>
</dbReference>
<dbReference type="FunFam" id="3.90.930.12:FF:000009">
    <property type="entry name" value="60S ribosomal protein L6"/>
    <property type="match status" value="1"/>
</dbReference>
<dbReference type="Gene3D" id="3.90.930.12">
    <property type="entry name" value="Ribosomal protein L6, alpha-beta domain"/>
    <property type="match status" value="2"/>
</dbReference>
<dbReference type="InterPro" id="IPR000702">
    <property type="entry name" value="Ribosomal_uL6-like"/>
</dbReference>
<dbReference type="InterPro" id="IPR036789">
    <property type="entry name" value="Ribosomal_uL6-like_a/b-dom_sf"/>
</dbReference>
<dbReference type="InterPro" id="IPR020040">
    <property type="entry name" value="Ribosomal_uL6_a/b-dom"/>
</dbReference>
<dbReference type="InterPro" id="IPR019906">
    <property type="entry name" value="Ribosomal_uL6_bac-type"/>
</dbReference>
<dbReference type="InterPro" id="IPR002358">
    <property type="entry name" value="Ribosomal_uL6_CS"/>
</dbReference>
<dbReference type="PANTHER" id="PTHR11655">
    <property type="entry name" value="60S/50S RIBOSOMAL PROTEIN L6/L9"/>
    <property type="match status" value="1"/>
</dbReference>
<dbReference type="PANTHER" id="PTHR11655:SF14">
    <property type="entry name" value="LARGE RIBOSOMAL SUBUNIT PROTEIN UL6M"/>
    <property type="match status" value="1"/>
</dbReference>
<dbReference type="Pfam" id="PF00347">
    <property type="entry name" value="Ribosomal_L6"/>
    <property type="match status" value="1"/>
</dbReference>
<dbReference type="PRINTS" id="PR00059">
    <property type="entry name" value="RIBOSOMALL6"/>
</dbReference>
<dbReference type="SUPFAM" id="SSF56053">
    <property type="entry name" value="Ribosomal protein L6"/>
    <property type="match status" value="2"/>
</dbReference>
<dbReference type="PROSITE" id="PS00525">
    <property type="entry name" value="RIBOSOMAL_L6_1"/>
    <property type="match status" value="1"/>
</dbReference>
<name>RM06_NEUCR</name>
<reference key="1">
    <citation type="journal article" date="2003" name="Nature">
        <title>The genome sequence of the filamentous fungus Neurospora crassa.</title>
        <authorList>
            <person name="Galagan J.E."/>
            <person name="Calvo S.E."/>
            <person name="Borkovich K.A."/>
            <person name="Selker E.U."/>
            <person name="Read N.D."/>
            <person name="Jaffe D.B."/>
            <person name="FitzHugh W."/>
            <person name="Ma L.-J."/>
            <person name="Smirnov S."/>
            <person name="Purcell S."/>
            <person name="Rehman B."/>
            <person name="Elkins T."/>
            <person name="Engels R."/>
            <person name="Wang S."/>
            <person name="Nielsen C.B."/>
            <person name="Butler J."/>
            <person name="Endrizzi M."/>
            <person name="Qui D."/>
            <person name="Ianakiev P."/>
            <person name="Bell-Pedersen D."/>
            <person name="Nelson M.A."/>
            <person name="Werner-Washburne M."/>
            <person name="Selitrennikoff C.P."/>
            <person name="Kinsey J.A."/>
            <person name="Braun E.L."/>
            <person name="Zelter A."/>
            <person name="Schulte U."/>
            <person name="Kothe G.O."/>
            <person name="Jedd G."/>
            <person name="Mewes H.-W."/>
            <person name="Staben C."/>
            <person name="Marcotte E."/>
            <person name="Greenberg D."/>
            <person name="Roy A."/>
            <person name="Foley K."/>
            <person name="Naylor J."/>
            <person name="Stange-Thomann N."/>
            <person name="Barrett R."/>
            <person name="Gnerre S."/>
            <person name="Kamal M."/>
            <person name="Kamvysselis M."/>
            <person name="Mauceli E.W."/>
            <person name="Bielke C."/>
            <person name="Rudd S."/>
            <person name="Frishman D."/>
            <person name="Krystofova S."/>
            <person name="Rasmussen C."/>
            <person name="Metzenberg R.L."/>
            <person name="Perkins D.D."/>
            <person name="Kroken S."/>
            <person name="Cogoni C."/>
            <person name="Macino G."/>
            <person name="Catcheside D.E.A."/>
            <person name="Li W."/>
            <person name="Pratt R.J."/>
            <person name="Osmani S.A."/>
            <person name="DeSouza C.P.C."/>
            <person name="Glass N.L."/>
            <person name="Orbach M.J."/>
            <person name="Berglund J.A."/>
            <person name="Voelker R."/>
            <person name="Yarden O."/>
            <person name="Plamann M."/>
            <person name="Seiler S."/>
            <person name="Dunlap J.C."/>
            <person name="Radford A."/>
            <person name="Aramayo R."/>
            <person name="Natvig D.O."/>
            <person name="Alex L.A."/>
            <person name="Mannhaupt G."/>
            <person name="Ebbole D.J."/>
            <person name="Freitag M."/>
            <person name="Paulsen I."/>
            <person name="Sachs M.S."/>
            <person name="Lander E.S."/>
            <person name="Nusbaum C."/>
            <person name="Birren B.W."/>
        </authorList>
    </citation>
    <scope>NUCLEOTIDE SEQUENCE [LARGE SCALE GENOMIC DNA]</scope>
    <source>
        <strain>ATCC 24698 / 74-OR23-1A / CBS 708.71 / DSM 1257 / FGSC 987</strain>
    </source>
</reference>
<reference evidence="6 7" key="2">
    <citation type="journal article" date="2020" name="Nat. Commun.">
        <title>Analysis of translating mitoribosome reveals functional characteristics of translation in mitochondria of fungi.</title>
        <authorList>
            <person name="Itoh Y."/>
            <person name="Naschberger A."/>
            <person name="Mortezaei N."/>
            <person name="Herrmann J.M."/>
            <person name="Amunts A."/>
        </authorList>
    </citation>
    <scope>STRUCTURE BY ELECTRON MICROSCOPY (2.74 ANGSTROMS)</scope>
</reference>
<feature type="chain" id="PRO_0000458607" description="Large ribosomal subunit protein uL6m">
    <location>
        <begin position="1"/>
        <end position="255"/>
    </location>
</feature>
<feature type="region of interest" description="Disordered" evidence="1">
    <location>
        <begin position="39"/>
        <end position="61"/>
    </location>
</feature>